<reference key="1">
    <citation type="journal article" date="2012" name="BMC Genomics">
        <title>Comparative genomics and transcriptomics of lineages I, II, and III strains of Listeria monocytogenes.</title>
        <authorList>
            <person name="Hain T."/>
            <person name="Ghai R."/>
            <person name="Billion A."/>
            <person name="Kuenne C.T."/>
            <person name="Steinweg C."/>
            <person name="Izar B."/>
            <person name="Mohamed W."/>
            <person name="Mraheil M."/>
            <person name="Domann E."/>
            <person name="Schaffrath S."/>
            <person name="Karst U."/>
            <person name="Goesmann A."/>
            <person name="Oehm S."/>
            <person name="Puhler A."/>
            <person name="Merkl R."/>
            <person name="Vorwerk S."/>
            <person name="Glaser P."/>
            <person name="Garrido P."/>
            <person name="Rusniok C."/>
            <person name="Buchrieser C."/>
            <person name="Goebel W."/>
            <person name="Chakraborty T."/>
        </authorList>
    </citation>
    <scope>NUCLEOTIDE SEQUENCE [LARGE SCALE GENOMIC DNA]</scope>
    <source>
        <strain>CLIP80459</strain>
    </source>
</reference>
<protein>
    <recommendedName>
        <fullName evidence="1">Bifunctional purine biosynthesis protein PurH</fullName>
    </recommendedName>
    <domain>
        <recommendedName>
            <fullName evidence="1">Phosphoribosylaminoimidazolecarboxamide formyltransferase</fullName>
            <ecNumber evidence="1">2.1.2.3</ecNumber>
        </recommendedName>
        <alternativeName>
            <fullName evidence="1">AICAR transformylase</fullName>
        </alternativeName>
    </domain>
    <domain>
        <recommendedName>
            <fullName evidence="1">IMP cyclohydrolase</fullName>
            <ecNumber evidence="1">3.5.4.10</ecNumber>
        </recommendedName>
        <alternativeName>
            <fullName evidence="1">ATIC</fullName>
        </alternativeName>
        <alternativeName>
            <fullName evidence="1">IMP synthase</fullName>
        </alternativeName>
        <alternativeName>
            <fullName evidence="1">Inosinicase</fullName>
        </alternativeName>
    </domain>
</protein>
<evidence type="ECO:0000255" key="1">
    <source>
        <dbReference type="HAMAP-Rule" id="MF_00139"/>
    </source>
</evidence>
<evidence type="ECO:0000255" key="2">
    <source>
        <dbReference type="PROSITE-ProRule" id="PRU01202"/>
    </source>
</evidence>
<proteinExistence type="inferred from homology"/>
<feature type="chain" id="PRO_1000203251" description="Bifunctional purine biosynthesis protein PurH">
    <location>
        <begin position="1"/>
        <end position="509"/>
    </location>
</feature>
<feature type="domain" description="MGS-like" evidence="2">
    <location>
        <begin position="1"/>
        <end position="144"/>
    </location>
</feature>
<sequence length="509" mass="54898">MKRALISVSDKNGIVPFAEKLVELGVEIISTGGTKAAFEQAGVPVTGIEDVTEFPEMLDGRVKTLHPAIHGGLLARRDTAEHMEAIAAHDIKPIDLVVVNLYPFQETIQKSGVTLEEAIENIDIGGPSMLRSAAKNYAAVTVVVDTADYDTVLTELEEHGATTFETRQRLAAKVFRHTAAYDALIAEYLTNITGETFPEKVTLTYNRKQVLRYGENPHQDAAFYTEPGTVENSISSAKQLHGKELSYNNIRDADAALKIASEFTEPVAVAVKHMNPCGVGVGENIEEAYLKAYEADETSIFGGIVALNKEVDAKTAEHMSKIFLEIIIAPSFSEEAFAILAKKKNIRLLTVPFAGSVKGFEKTSVNGGLLIQASDSVIEDTASYEVVTEKQPTEAEMKALIAQWKIVKHVKSNAIVVGSDKQTLGIGAGQMNRIGSALIALEQAGEKAKGAVLASDAFFPMDDTVEAAAKAGITAIIQPGGSIKDKESIEMANKYGISMVLTHVRHFKH</sequence>
<comment type="catalytic activity">
    <reaction evidence="1">
        <text>(6R)-10-formyltetrahydrofolate + 5-amino-1-(5-phospho-beta-D-ribosyl)imidazole-4-carboxamide = 5-formamido-1-(5-phospho-D-ribosyl)imidazole-4-carboxamide + (6S)-5,6,7,8-tetrahydrofolate</text>
        <dbReference type="Rhea" id="RHEA:22192"/>
        <dbReference type="ChEBI" id="CHEBI:57453"/>
        <dbReference type="ChEBI" id="CHEBI:58467"/>
        <dbReference type="ChEBI" id="CHEBI:58475"/>
        <dbReference type="ChEBI" id="CHEBI:195366"/>
        <dbReference type="EC" id="2.1.2.3"/>
    </reaction>
</comment>
<comment type="catalytic activity">
    <reaction evidence="1">
        <text>IMP + H2O = 5-formamido-1-(5-phospho-D-ribosyl)imidazole-4-carboxamide</text>
        <dbReference type="Rhea" id="RHEA:18445"/>
        <dbReference type="ChEBI" id="CHEBI:15377"/>
        <dbReference type="ChEBI" id="CHEBI:58053"/>
        <dbReference type="ChEBI" id="CHEBI:58467"/>
        <dbReference type="EC" id="3.5.4.10"/>
    </reaction>
</comment>
<comment type="pathway">
    <text evidence="1">Purine metabolism; IMP biosynthesis via de novo pathway; 5-formamido-1-(5-phospho-D-ribosyl)imidazole-4-carboxamide from 5-amino-1-(5-phospho-D-ribosyl)imidazole-4-carboxamide (10-formyl THF route): step 1/1.</text>
</comment>
<comment type="pathway">
    <text evidence="1">Purine metabolism; IMP biosynthesis via de novo pathway; IMP from 5-formamido-1-(5-phospho-D-ribosyl)imidazole-4-carboxamide: step 1/1.</text>
</comment>
<comment type="domain">
    <text evidence="1">The IMP cyclohydrolase activity resides in the N-terminal region.</text>
</comment>
<comment type="similarity">
    <text evidence="1">Belongs to the PurH family.</text>
</comment>
<gene>
    <name evidence="1" type="primary">purH</name>
    <name type="ordered locus">Lm4b_01779</name>
</gene>
<accession>C1KW64</accession>
<name>PUR9_LISMC</name>
<keyword id="KW-0378">Hydrolase</keyword>
<keyword id="KW-0511">Multifunctional enzyme</keyword>
<keyword id="KW-0658">Purine biosynthesis</keyword>
<keyword id="KW-0808">Transferase</keyword>
<organism>
    <name type="scientific">Listeria monocytogenes serotype 4b (strain CLIP80459)</name>
    <dbReference type="NCBI Taxonomy" id="568819"/>
    <lineage>
        <taxon>Bacteria</taxon>
        <taxon>Bacillati</taxon>
        <taxon>Bacillota</taxon>
        <taxon>Bacilli</taxon>
        <taxon>Bacillales</taxon>
        <taxon>Listeriaceae</taxon>
        <taxon>Listeria</taxon>
    </lineage>
</organism>
<dbReference type="EC" id="2.1.2.3" evidence="1"/>
<dbReference type="EC" id="3.5.4.10" evidence="1"/>
<dbReference type="EMBL" id="FM242711">
    <property type="protein sequence ID" value="CAS05539.1"/>
    <property type="molecule type" value="Genomic_DNA"/>
</dbReference>
<dbReference type="RefSeq" id="WP_003731568.1">
    <property type="nucleotide sequence ID" value="NC_012488.1"/>
</dbReference>
<dbReference type="SMR" id="C1KW64"/>
<dbReference type="KEGG" id="lmc:Lm4b_01779"/>
<dbReference type="HOGENOM" id="CLU_016316_5_2_9"/>
<dbReference type="UniPathway" id="UPA00074">
    <property type="reaction ID" value="UER00133"/>
</dbReference>
<dbReference type="UniPathway" id="UPA00074">
    <property type="reaction ID" value="UER00135"/>
</dbReference>
<dbReference type="GO" id="GO:0005829">
    <property type="term" value="C:cytosol"/>
    <property type="evidence" value="ECO:0007669"/>
    <property type="project" value="TreeGrafter"/>
</dbReference>
<dbReference type="GO" id="GO:0003937">
    <property type="term" value="F:IMP cyclohydrolase activity"/>
    <property type="evidence" value="ECO:0007669"/>
    <property type="project" value="UniProtKB-UniRule"/>
</dbReference>
<dbReference type="GO" id="GO:0004643">
    <property type="term" value="F:phosphoribosylaminoimidazolecarboxamide formyltransferase activity"/>
    <property type="evidence" value="ECO:0007669"/>
    <property type="project" value="UniProtKB-UniRule"/>
</dbReference>
<dbReference type="GO" id="GO:0006189">
    <property type="term" value="P:'de novo' IMP biosynthetic process"/>
    <property type="evidence" value="ECO:0007669"/>
    <property type="project" value="UniProtKB-UniRule"/>
</dbReference>
<dbReference type="CDD" id="cd01421">
    <property type="entry name" value="IMPCH"/>
    <property type="match status" value="1"/>
</dbReference>
<dbReference type="FunFam" id="3.40.140.20:FF:000001">
    <property type="entry name" value="Bifunctional purine biosynthesis protein PurH"/>
    <property type="match status" value="1"/>
</dbReference>
<dbReference type="FunFam" id="3.40.140.20:FF:000002">
    <property type="entry name" value="Bifunctional purine biosynthesis protein PurH"/>
    <property type="match status" value="1"/>
</dbReference>
<dbReference type="FunFam" id="3.40.50.1380:FF:000001">
    <property type="entry name" value="Bifunctional purine biosynthesis protein PurH"/>
    <property type="match status" value="1"/>
</dbReference>
<dbReference type="Gene3D" id="3.40.140.20">
    <property type="match status" value="2"/>
</dbReference>
<dbReference type="Gene3D" id="3.40.50.1380">
    <property type="entry name" value="Methylglyoxal synthase-like domain"/>
    <property type="match status" value="1"/>
</dbReference>
<dbReference type="HAMAP" id="MF_00139">
    <property type="entry name" value="PurH"/>
    <property type="match status" value="1"/>
</dbReference>
<dbReference type="InterPro" id="IPR024051">
    <property type="entry name" value="AICAR_Tfase_dup_dom_sf"/>
</dbReference>
<dbReference type="InterPro" id="IPR016193">
    <property type="entry name" value="Cytidine_deaminase-like"/>
</dbReference>
<dbReference type="InterPro" id="IPR011607">
    <property type="entry name" value="MGS-like_dom"/>
</dbReference>
<dbReference type="InterPro" id="IPR036914">
    <property type="entry name" value="MGS-like_dom_sf"/>
</dbReference>
<dbReference type="InterPro" id="IPR002695">
    <property type="entry name" value="PurH-like"/>
</dbReference>
<dbReference type="NCBIfam" id="NF002049">
    <property type="entry name" value="PRK00881.1"/>
    <property type="match status" value="1"/>
</dbReference>
<dbReference type="NCBIfam" id="TIGR00355">
    <property type="entry name" value="purH"/>
    <property type="match status" value="1"/>
</dbReference>
<dbReference type="PANTHER" id="PTHR11692:SF0">
    <property type="entry name" value="BIFUNCTIONAL PURINE BIOSYNTHESIS PROTEIN ATIC"/>
    <property type="match status" value="1"/>
</dbReference>
<dbReference type="PANTHER" id="PTHR11692">
    <property type="entry name" value="BIFUNCTIONAL PURINE BIOSYNTHESIS PROTEIN PURH"/>
    <property type="match status" value="1"/>
</dbReference>
<dbReference type="Pfam" id="PF01808">
    <property type="entry name" value="AICARFT_IMPCHas"/>
    <property type="match status" value="1"/>
</dbReference>
<dbReference type="Pfam" id="PF02142">
    <property type="entry name" value="MGS"/>
    <property type="match status" value="1"/>
</dbReference>
<dbReference type="PIRSF" id="PIRSF000414">
    <property type="entry name" value="AICARFT_IMPCHas"/>
    <property type="match status" value="1"/>
</dbReference>
<dbReference type="SMART" id="SM00798">
    <property type="entry name" value="AICARFT_IMPCHas"/>
    <property type="match status" value="1"/>
</dbReference>
<dbReference type="SMART" id="SM00851">
    <property type="entry name" value="MGS"/>
    <property type="match status" value="1"/>
</dbReference>
<dbReference type="SUPFAM" id="SSF53927">
    <property type="entry name" value="Cytidine deaminase-like"/>
    <property type="match status" value="1"/>
</dbReference>
<dbReference type="SUPFAM" id="SSF52335">
    <property type="entry name" value="Methylglyoxal synthase-like"/>
    <property type="match status" value="1"/>
</dbReference>
<dbReference type="PROSITE" id="PS51855">
    <property type="entry name" value="MGS"/>
    <property type="match status" value="1"/>
</dbReference>